<evidence type="ECO:0000255" key="1"/>
<evidence type="ECO:0000255" key="2">
    <source>
        <dbReference type="PROSITE-ProRule" id="PRU00498"/>
    </source>
</evidence>
<evidence type="ECO:0000256" key="3">
    <source>
        <dbReference type="SAM" id="MobiDB-lite"/>
    </source>
</evidence>
<evidence type="ECO:0000269" key="4">
    <source>
    </source>
</evidence>
<evidence type="ECO:0000303" key="5">
    <source>
    </source>
</evidence>
<evidence type="ECO:0000305" key="6"/>
<sequence length="832" mass="94489">MSLTASAASAALTLLADGPDDGSKRPWRPNDPVKEQRDLYTQFVISTALGLSAFLAFCILRPKWTELYAARRRQRNAASRLPELPDTLFGWIPVLHQITEEEVLQSAGLDAYVFLSFFKFAIRFLLAVFIFAVAIILPMHYKYTGQYGVPGWDNPPGNKTTSPIDGSEKEKPVTDPAYLWIYVLFAYVFSGLAIYMLLDETKVIIRTRQTYLGNQTSTTDRTIRLSGIPHDLGTEDKIKEFVEGLRVGKVESITVCRKWRELDELIDERMKVIRELERAWTKHIGYKRPKNDGNALPLTEQQPRDADDERSGLLSGHDNEHVSGYSNERPKVRIWYGLFKLRFRMIDAIDYYEEKLRKIDEYIQNAREKEYRTTEIAFVTMESIAASQMLVQAILDPHPMQMFARLAPAPADVIWKNTYLSRTRRMVQSWSITFVIGFLTVFWSVLLVPIASLLELKTLETIVPRLAEFLQEHPIIKSLVQTGLPTLAFSLLTVAVPYLYEWLSNNQGMVSRGDVELSVISKNFFFSFFNLFLLFTVFGTASGFYGFWESLRDAFKDSTTIALALANSLEGLAPFYINLLILQGLGLFPFRLLEFGSVALYPFQFLSARTPREYAELSTPPKFSYGFSIPQTILILVICVVYSVFPSSWLICLFGLIYFTVGKFIYKYQLLYAMDHQQHSTGRAWPMICNRVFVGLLVHQLAMIGVLALRRAITRSLLLVPLLGFTVWFSYWFGRTYEPLMKFIALKSINRDQPGGGDISPSPSSTLSPPSGLDRDSLPIRIGGQDLELRLKKYVNPSLIVPLHAAWLPGRNPARGNGNGASAFEVHQTQNV</sequence>
<name>PENV_PENRW</name>
<dbReference type="EMBL" id="AM920437">
    <property type="protein sequence ID" value="CAP99503.1"/>
    <property type="molecule type" value="Genomic_DNA"/>
</dbReference>
<dbReference type="RefSeq" id="XP_002566110.1">
    <property type="nucleotide sequence ID" value="XM_002566064.1"/>
</dbReference>
<dbReference type="SMR" id="B6HTR9"/>
<dbReference type="STRING" id="500485.B6HTR9"/>
<dbReference type="GlyCosmos" id="B6HTR9">
    <property type="glycosylation" value="2 sites, No reported glycans"/>
</dbReference>
<dbReference type="GeneID" id="8308377"/>
<dbReference type="KEGG" id="pcs:N7525_004165"/>
<dbReference type="VEuPathDB" id="FungiDB:PCH_Pc22g22150"/>
<dbReference type="eggNOG" id="KOG1134">
    <property type="taxonomic scope" value="Eukaryota"/>
</dbReference>
<dbReference type="HOGENOM" id="CLU_002458_0_0_1"/>
<dbReference type="OMA" id="CSCKKEN"/>
<dbReference type="OrthoDB" id="1689567at2759"/>
<dbReference type="BioCyc" id="PCHR:PC22G22150-MONOMER"/>
<dbReference type="Proteomes" id="UP000000724">
    <property type="component" value="Contig Pc00c22"/>
</dbReference>
<dbReference type="GO" id="GO:0005886">
    <property type="term" value="C:plasma membrane"/>
    <property type="evidence" value="ECO:0007669"/>
    <property type="project" value="TreeGrafter"/>
</dbReference>
<dbReference type="GO" id="GO:0005774">
    <property type="term" value="C:vacuolar membrane"/>
    <property type="evidence" value="ECO:0007669"/>
    <property type="project" value="UniProtKB-SubCell"/>
</dbReference>
<dbReference type="GO" id="GO:0005227">
    <property type="term" value="F:calcium-activated cation channel activity"/>
    <property type="evidence" value="ECO:0007669"/>
    <property type="project" value="InterPro"/>
</dbReference>
<dbReference type="GO" id="GO:0006865">
    <property type="term" value="P:amino acid transport"/>
    <property type="evidence" value="ECO:0007669"/>
    <property type="project" value="UniProtKB-KW"/>
</dbReference>
<dbReference type="InterPro" id="IPR045122">
    <property type="entry name" value="Csc1-like"/>
</dbReference>
<dbReference type="InterPro" id="IPR003864">
    <property type="entry name" value="CSC1/OSCA1-like_7TM"/>
</dbReference>
<dbReference type="InterPro" id="IPR027815">
    <property type="entry name" value="CSC1/OSCA1-like_cyt"/>
</dbReference>
<dbReference type="InterPro" id="IPR032880">
    <property type="entry name" value="Csc1/OSCA1-like_N"/>
</dbReference>
<dbReference type="PANTHER" id="PTHR13018">
    <property type="entry name" value="PROBABLE MEMBRANE PROTEIN DUF221-RELATED"/>
    <property type="match status" value="1"/>
</dbReference>
<dbReference type="PANTHER" id="PTHR13018:SF5">
    <property type="entry name" value="RE44586P"/>
    <property type="match status" value="1"/>
</dbReference>
<dbReference type="Pfam" id="PF14703">
    <property type="entry name" value="PHM7_cyt"/>
    <property type="match status" value="1"/>
</dbReference>
<dbReference type="Pfam" id="PF02714">
    <property type="entry name" value="RSN1_7TM"/>
    <property type="match status" value="1"/>
</dbReference>
<dbReference type="Pfam" id="PF13967">
    <property type="entry name" value="RSN1_TM"/>
    <property type="match status" value="1"/>
</dbReference>
<comment type="function">
    <text evidence="4">Vacuolar transmembrane transporter that participates in the first stage of the beta-lactam biosynthesis (the formation of the ACV tripeptide), probably taking part in the supply of amino acids from the vacuolar lumen to the vacuole-anchored ACV synthetase.</text>
</comment>
<comment type="subcellular location">
    <subcellularLocation>
        <location evidence="4">Vacuole membrane</location>
        <topology evidence="1">Multi-pass membrane protein</topology>
    </subcellularLocation>
</comment>
<comment type="disruption phenotype">
    <text evidence="4">Leads to a drastic reduction in the production of penicillin and its biosynthetic intermediates delta-(L-alpha-aminoadipyl-L-cysteinyl-D-valine) and isopenicillin N.</text>
</comment>
<comment type="similarity">
    <text evidence="6">Belongs to the CSC1 (TC 1.A.17) family.</text>
</comment>
<proteinExistence type="inferred from homology"/>
<organism>
    <name type="scientific">Penicillium rubens (strain ATCC 28089 / DSM 1075 / NRRL 1951 / Wisconsin 54-1255)</name>
    <name type="common">Penicillium chrysogenum</name>
    <dbReference type="NCBI Taxonomy" id="500485"/>
    <lineage>
        <taxon>Eukaryota</taxon>
        <taxon>Fungi</taxon>
        <taxon>Dikarya</taxon>
        <taxon>Ascomycota</taxon>
        <taxon>Pezizomycotina</taxon>
        <taxon>Eurotiomycetes</taxon>
        <taxon>Eurotiomycetidae</taxon>
        <taxon>Eurotiales</taxon>
        <taxon>Aspergillaceae</taxon>
        <taxon>Penicillium</taxon>
        <taxon>Penicillium chrysogenum species complex</taxon>
    </lineage>
</organism>
<gene>
    <name evidence="5" type="primary">penV</name>
    <name type="ORF">Pc22g22150</name>
</gene>
<keyword id="KW-0029">Amino-acid transport</keyword>
<keyword id="KW-0325">Glycoprotein</keyword>
<keyword id="KW-0472">Membrane</keyword>
<keyword id="KW-1185">Reference proteome</keyword>
<keyword id="KW-0812">Transmembrane</keyword>
<keyword id="KW-1133">Transmembrane helix</keyword>
<keyword id="KW-0813">Transport</keyword>
<keyword id="KW-0926">Vacuole</keyword>
<feature type="chain" id="PRO_0000455150" description="Vacuolar transmembrane transporter penV">
    <location>
        <begin position="1"/>
        <end position="832"/>
    </location>
</feature>
<feature type="transmembrane region" description="Helical" evidence="1">
    <location>
        <begin position="39"/>
        <end position="59"/>
    </location>
</feature>
<feature type="transmembrane region" description="Helical" evidence="1">
    <location>
        <begin position="117"/>
        <end position="137"/>
    </location>
</feature>
<feature type="transmembrane region" description="Helical" evidence="1">
    <location>
        <begin position="178"/>
        <end position="198"/>
    </location>
</feature>
<feature type="transmembrane region" description="Helical" evidence="1">
    <location>
        <begin position="434"/>
        <end position="454"/>
    </location>
</feature>
<feature type="transmembrane region" description="Helical" evidence="1">
    <location>
        <begin position="483"/>
        <end position="503"/>
    </location>
</feature>
<feature type="transmembrane region" description="Helical" evidence="1">
    <location>
        <begin position="524"/>
        <end position="544"/>
    </location>
</feature>
<feature type="transmembrane region" description="Helical" evidence="1">
    <location>
        <begin position="560"/>
        <end position="582"/>
    </location>
</feature>
<feature type="transmembrane region" description="Helical" evidence="1">
    <location>
        <begin position="587"/>
        <end position="608"/>
    </location>
</feature>
<feature type="transmembrane region" description="Helical" evidence="1">
    <location>
        <begin position="623"/>
        <end position="645"/>
    </location>
</feature>
<feature type="transmembrane region" description="Helical" evidence="1">
    <location>
        <begin position="650"/>
        <end position="672"/>
    </location>
</feature>
<feature type="transmembrane region" description="Helical" evidence="1">
    <location>
        <begin position="687"/>
        <end position="707"/>
    </location>
</feature>
<feature type="transmembrane region" description="Helical" evidence="1">
    <location>
        <begin position="713"/>
        <end position="733"/>
    </location>
</feature>
<feature type="region of interest" description="Disordered" evidence="3">
    <location>
        <begin position="152"/>
        <end position="171"/>
    </location>
</feature>
<feature type="region of interest" description="Disordered" evidence="3">
    <location>
        <begin position="291"/>
        <end position="322"/>
    </location>
</feature>
<feature type="region of interest" description="Disordered" evidence="3">
    <location>
        <begin position="754"/>
        <end position="777"/>
    </location>
</feature>
<feature type="compositionally biased region" description="Basic and acidic residues" evidence="3">
    <location>
        <begin position="302"/>
        <end position="321"/>
    </location>
</feature>
<feature type="compositionally biased region" description="Low complexity" evidence="3">
    <location>
        <begin position="759"/>
        <end position="771"/>
    </location>
</feature>
<feature type="glycosylation site" description="N-linked (GlcNAc...) asparagine" evidence="2">
    <location>
        <position position="158"/>
    </location>
</feature>
<feature type="glycosylation site" description="N-linked (GlcNAc...) asparagine" evidence="2">
    <location>
        <position position="214"/>
    </location>
</feature>
<reference key="1">
    <citation type="journal article" date="2008" name="Nat. Biotechnol.">
        <title>Genome sequencing and analysis of the filamentous fungus Penicillium chrysogenum.</title>
        <authorList>
            <person name="van den Berg M.A."/>
            <person name="Albang R."/>
            <person name="Albermann K."/>
            <person name="Badger J.H."/>
            <person name="Daran J.-M."/>
            <person name="Driessen A.J.M."/>
            <person name="Garcia-Estrada C."/>
            <person name="Fedorova N.D."/>
            <person name="Harris D.M."/>
            <person name="Heijne W.H.M."/>
            <person name="Joardar V.S."/>
            <person name="Kiel J.A.K.W."/>
            <person name="Kovalchuk A."/>
            <person name="Martin J.F."/>
            <person name="Nierman W.C."/>
            <person name="Nijland J.G."/>
            <person name="Pronk J.T."/>
            <person name="Roubos J.A."/>
            <person name="van der Klei I.J."/>
            <person name="van Peij N.N.M.E."/>
            <person name="Veenhuis M."/>
            <person name="von Doehren H."/>
            <person name="Wagner C."/>
            <person name="Wortman J.R."/>
            <person name="Bovenberg R.A.L."/>
        </authorList>
    </citation>
    <scope>NUCLEOTIDE SEQUENCE [LARGE SCALE GENOMIC DNA]</scope>
    <source>
        <strain>ATCC 28089 / DSM 1075 / NRRL 1951 / Wisconsin 54-1255</strain>
    </source>
</reference>
<reference key="2">
    <citation type="journal article" date="2013" name="Appl. Microbiol. Biotechnol.">
        <title>A vacuolar membrane protein affects drastically the biosynthesis of the ACV tripeptide and the beta-lactam pathway of Penicillium chrysogenum.</title>
        <authorList>
            <person name="Fernandez-Aguado M."/>
            <person name="Teijeira F."/>
            <person name="Martin J.F."/>
            <person name="Ullan R.V."/>
        </authorList>
    </citation>
    <scope>FUNCTION</scope>
    <scope>DISRUPTION PHENOTYPE</scope>
    <scope>SUBCELLULAR LOCATION</scope>
</reference>
<protein>
    <recommendedName>
        <fullName evidence="5">Vacuolar transmembrane transporter penV</fullName>
    </recommendedName>
</protein>
<accession>B6HTR9</accession>